<gene>
    <name type="primary">PRNP</name>
    <name type="synonym">PRP</name>
</gene>
<reference key="1">
    <citation type="journal article" date="1995" name="J. Mol. Biol.">
        <title>Prion protein gene variation among primates.</title>
        <authorList>
            <person name="Schaetzl H.M."/>
            <person name="Da Costa M."/>
            <person name="Taylor L."/>
            <person name="Cohen F.E."/>
            <person name="Prusiner S.B."/>
        </authorList>
    </citation>
    <scope>NUCLEOTIDE SEQUENCE [GENOMIC DNA]</scope>
</reference>
<dbReference type="EMBL" id="U08303">
    <property type="protein sequence ID" value="AAC50091.1"/>
    <property type="molecule type" value="Genomic_DNA"/>
</dbReference>
<dbReference type="PIR" id="S71056">
    <property type="entry name" value="S71056"/>
</dbReference>
<dbReference type="SMR" id="P40255"/>
<dbReference type="GlyCosmos" id="P40255">
    <property type="glycosylation" value="2 sites, No reported glycans"/>
</dbReference>
<dbReference type="GO" id="GO:0005794">
    <property type="term" value="C:Golgi apparatus"/>
    <property type="evidence" value="ECO:0007669"/>
    <property type="project" value="UniProtKB-SubCell"/>
</dbReference>
<dbReference type="GO" id="GO:0005886">
    <property type="term" value="C:plasma membrane"/>
    <property type="evidence" value="ECO:0007669"/>
    <property type="project" value="UniProtKB-SubCell"/>
</dbReference>
<dbReference type="GO" id="GO:0098552">
    <property type="term" value="C:side of membrane"/>
    <property type="evidence" value="ECO:0007669"/>
    <property type="project" value="UniProtKB-KW"/>
</dbReference>
<dbReference type="GO" id="GO:0005507">
    <property type="term" value="F:copper ion binding"/>
    <property type="evidence" value="ECO:0000250"/>
    <property type="project" value="UniProtKB"/>
</dbReference>
<dbReference type="GO" id="GO:0051260">
    <property type="term" value="P:protein homooligomerization"/>
    <property type="evidence" value="ECO:0007669"/>
    <property type="project" value="InterPro"/>
</dbReference>
<dbReference type="FunFam" id="1.10.790.10:FF:000001">
    <property type="entry name" value="Major prion protein"/>
    <property type="match status" value="1"/>
</dbReference>
<dbReference type="Gene3D" id="1.10.790.10">
    <property type="entry name" value="Prion/Doppel protein, beta-ribbon domain"/>
    <property type="match status" value="1"/>
</dbReference>
<dbReference type="InterPro" id="IPR000817">
    <property type="entry name" value="Prion"/>
</dbReference>
<dbReference type="InterPro" id="IPR036924">
    <property type="entry name" value="Prion/Doppel_b-ribbon_dom_sf"/>
</dbReference>
<dbReference type="InterPro" id="IPR022416">
    <property type="entry name" value="Prion/Doppel_prot_b-ribbon_dom"/>
</dbReference>
<dbReference type="InterPro" id="IPR020949">
    <property type="entry name" value="Prion_copper_b_octapeptide"/>
</dbReference>
<dbReference type="InterPro" id="IPR025860">
    <property type="entry name" value="Prion_N"/>
</dbReference>
<dbReference type="PANTHER" id="PTHR15506">
    <property type="entry name" value="DOPPEL PRION"/>
    <property type="match status" value="1"/>
</dbReference>
<dbReference type="PANTHER" id="PTHR15506:SF2">
    <property type="entry name" value="MAJOR PRION PROTEIN"/>
    <property type="match status" value="1"/>
</dbReference>
<dbReference type="Pfam" id="PF00377">
    <property type="entry name" value="Prion"/>
    <property type="match status" value="1"/>
</dbReference>
<dbReference type="Pfam" id="PF11587">
    <property type="entry name" value="Prion_bPrPp"/>
    <property type="match status" value="1"/>
</dbReference>
<dbReference type="Pfam" id="PF03991">
    <property type="entry name" value="Prion_octapep"/>
    <property type="match status" value="1"/>
</dbReference>
<dbReference type="PRINTS" id="PR00341">
    <property type="entry name" value="PRION"/>
</dbReference>
<dbReference type="SMART" id="SM00157">
    <property type="entry name" value="PRP"/>
    <property type="match status" value="1"/>
</dbReference>
<dbReference type="SUPFAM" id="SSF54098">
    <property type="entry name" value="Prion-like"/>
    <property type="match status" value="1"/>
</dbReference>
<dbReference type="PROSITE" id="PS00291">
    <property type="entry name" value="PRION_1"/>
    <property type="match status" value="1"/>
</dbReference>
<dbReference type="PROSITE" id="PS00706">
    <property type="entry name" value="PRION_2"/>
    <property type="match status" value="1"/>
</dbReference>
<protein>
    <recommendedName>
        <fullName>Major prion protein</fullName>
        <shortName>PrP</shortName>
    </recommendedName>
    <alternativeName>
        <fullName>PrP27-30</fullName>
    </alternativeName>
    <alternativeName>
        <fullName>PrP33-35C</fullName>
    </alternativeName>
    <cdAntigenName>CD230</cdAntigenName>
</protein>
<evidence type="ECO:0000250" key="1"/>
<evidence type="ECO:0000250" key="2">
    <source>
        <dbReference type="UniProtKB" id="P04156"/>
    </source>
</evidence>
<evidence type="ECO:0000250" key="3">
    <source>
        <dbReference type="UniProtKB" id="P04273"/>
    </source>
</evidence>
<evidence type="ECO:0000250" key="4">
    <source>
        <dbReference type="UniProtKB" id="P04925"/>
    </source>
</evidence>
<evidence type="ECO:0000255" key="5"/>
<evidence type="ECO:0000256" key="6">
    <source>
        <dbReference type="SAM" id="MobiDB-lite"/>
    </source>
</evidence>
<evidence type="ECO:0000305" key="7"/>
<comment type="function">
    <text evidence="2 4">Its primary physiological function is unclear. May play a role in neuronal development and synaptic plasticity. May be required for neuronal myelin sheath maintenance. May promote myelin homeostasis through acting as an agonist for ADGRG6 receptor. May play a role in iron uptake and iron homeostasis. Soluble oligomers are toxic to cultured neuroblastoma cells and induce apoptosis (in vitro) (By similarity). Association with GPC1 (via its heparan sulfate chains) targets PRNP to lipid rafts. Also provides Cu(2+) or Zn(2+) for the ascorbate-mediated GPC1 deaminase degradation of its heparan sulfate side chains (By similarity).</text>
</comment>
<comment type="subunit">
    <text evidence="2 4">Monomer and homodimer. Has a tendency to aggregate into amyloid fibrils containing a cross-beta spine, formed by a steric zipper of superposed beta-strands. Soluble oligomers may represent an intermediate stage on the path to fibril formation. Copper binding may promote oligomerization. Interacts with GRB2, APP, ERI3/PRNPIP and SYN1 (By similarity). Mislocalized cytosolically exposed PrP interacts with MGRN1; this interaction alters MGRN1 subcellular location and causes lysosomal enlargement (By similarity). Interacts with APP. Interacts with KIAA1191 (By similarity). Interacts with ADGRG6 (By similarity).</text>
</comment>
<comment type="subcellular location">
    <subcellularLocation>
        <location evidence="2">Cell membrane</location>
        <topology evidence="2">Lipid-anchor</topology>
        <topology evidence="2">GPI-anchor</topology>
    </subcellularLocation>
    <subcellularLocation>
        <location evidence="4">Golgi apparatus</location>
    </subcellularLocation>
    <text evidence="2">Targeted to lipid rafts via association with the heparan sulfate chains of GPC1. Colocates, in the presence of Cu(2+), to vesicles in para- and perinuclear regions, where both proteins undergo internalization. Heparin displaces PRNP from lipid rafts and promotes endocytosis.</text>
</comment>
<comment type="domain">
    <text evidence="2">The normal, monomeric form has a mainly alpha-helical structure. The disease-associated, protease-resistant form forms amyloid fibrils containing a cross-beta spine, formed by a steric zipper of superposed beta-strands. Disease mutations may favor intermolecular contacts via short beta strands, and may thereby trigger oligomerization.</text>
</comment>
<comment type="domain">
    <text evidence="2">Contains an N-terminal region composed of octamer repeats. At low copper concentrations, the sidechains of His residues from three or four repeats contribute to the binding of a single copper ion. Alternatively, a copper ion can be bound by interaction with the sidechain and backbone amide nitrogen of a single His residue. The observed copper binding stoichiometry suggests that two repeat regions cooperate to stabilize the binding of a single copper ion. At higher copper concentrations, each octamer can bind one copper ion by interactions with the His sidechain and Gly backbone atoms. A mixture of binding types may occur, especially in the case of octamer repeat expansion. Copper binding may stabilize the conformation of this region and may promote oligomerization.</text>
</comment>
<comment type="disease">
    <text evidence="7">PrP is found in high quantity in the brain of humans and animals infected with the degenerative neurological diseases kuru, Creutzfeldt-Jakob disease (CJD), Gerstmann-Straussler syndrome (GSS), scrapie, bovine spongiform encephalopathy (BSE), transmissible mink encephalopathy (TME), etc.</text>
</comment>
<comment type="similarity">
    <text evidence="7">Belongs to the prion family.</text>
</comment>
<accession>P40255</accession>
<organism>
    <name type="scientific">Mandrillus sphinx</name>
    <name type="common">Mandrill</name>
    <name type="synonym">Papio sphinx</name>
    <dbReference type="NCBI Taxonomy" id="9561"/>
    <lineage>
        <taxon>Eukaryota</taxon>
        <taxon>Metazoa</taxon>
        <taxon>Chordata</taxon>
        <taxon>Craniata</taxon>
        <taxon>Vertebrata</taxon>
        <taxon>Euteleostomi</taxon>
        <taxon>Mammalia</taxon>
        <taxon>Eutheria</taxon>
        <taxon>Euarchontoglires</taxon>
        <taxon>Primates</taxon>
        <taxon>Haplorrhini</taxon>
        <taxon>Catarrhini</taxon>
        <taxon>Cercopithecidae</taxon>
        <taxon>Cercopithecinae</taxon>
        <taxon>Mandrillus</taxon>
    </lineage>
</organism>
<keyword id="KW-0034">Amyloid</keyword>
<keyword id="KW-1003">Cell membrane</keyword>
<keyword id="KW-0186">Copper</keyword>
<keyword id="KW-1015">Disulfide bond</keyword>
<keyword id="KW-0325">Glycoprotein</keyword>
<keyword id="KW-0333">Golgi apparatus</keyword>
<keyword id="KW-0336">GPI-anchor</keyword>
<keyword id="KW-0449">Lipoprotein</keyword>
<keyword id="KW-0472">Membrane</keyword>
<keyword id="KW-0479">Metal-binding</keyword>
<keyword id="KW-0640">Prion</keyword>
<keyword id="KW-0677">Repeat</keyword>
<keyword id="KW-0732">Signal</keyword>
<keyword id="KW-0862">Zinc</keyword>
<feature type="signal peptide" evidence="1">
    <location>
        <begin position="1" status="less than"/>
        <end position="15"/>
    </location>
</feature>
<feature type="chain" id="PRO_0000025693" description="Major prion protein">
    <location>
        <begin position="16"/>
        <end position="223"/>
    </location>
</feature>
<feature type="propeptide" id="PRO_0000025694" description="Removed in mature form" evidence="1">
    <location>
        <begin position="224"/>
        <end position="241" status="greater than"/>
    </location>
</feature>
<feature type="repeat" description="1">
    <location>
        <begin position="44"/>
        <end position="52"/>
    </location>
</feature>
<feature type="repeat" description="2">
    <location>
        <begin position="53"/>
        <end position="60"/>
    </location>
</feature>
<feature type="repeat" description="3">
    <location>
        <begin position="61"/>
        <end position="68"/>
    </location>
</feature>
<feature type="repeat" description="4">
    <location>
        <begin position="69"/>
        <end position="76"/>
    </location>
</feature>
<feature type="repeat" description="5">
    <location>
        <begin position="77"/>
        <end position="84"/>
    </location>
</feature>
<feature type="region of interest" description="Interaction with GRB2, ERI3 and SYN1" evidence="4">
    <location>
        <begin position="16"/>
        <end position="223"/>
    </location>
</feature>
<feature type="region of interest" description="Interaction with ADGRG6" evidence="4">
    <location>
        <begin position="16"/>
        <end position="31"/>
    </location>
</feature>
<feature type="region of interest" description="Disordered" evidence="6">
    <location>
        <begin position="18"/>
        <end position="101"/>
    </location>
</feature>
<feature type="region of interest" description="5 X 8 AA tandem repeats of P-H-G-G-G-W-G-Q">
    <location>
        <begin position="44"/>
        <end position="84"/>
    </location>
</feature>
<feature type="compositionally biased region" description="Gly residues" evidence="6">
    <location>
        <begin position="45"/>
        <end position="88"/>
    </location>
</feature>
<feature type="compositionally biased region" description="Basic residues" evidence="6">
    <location>
        <begin position="91"/>
        <end position="101"/>
    </location>
</feature>
<feature type="binding site" evidence="2">
    <location>
        <position position="54"/>
    </location>
    <ligand>
        <name>Cu(2+)</name>
        <dbReference type="ChEBI" id="CHEBI:29036"/>
        <label>1</label>
    </ligand>
</feature>
<feature type="binding site" evidence="2">
    <location>
        <position position="55"/>
    </location>
    <ligand>
        <name>Cu(2+)</name>
        <dbReference type="ChEBI" id="CHEBI:29036"/>
        <label>1</label>
    </ligand>
</feature>
<feature type="binding site" evidence="2">
    <location>
        <position position="56"/>
    </location>
    <ligand>
        <name>Cu(2+)</name>
        <dbReference type="ChEBI" id="CHEBI:29036"/>
        <label>1</label>
    </ligand>
</feature>
<feature type="binding site" evidence="2">
    <location>
        <position position="62"/>
    </location>
    <ligand>
        <name>Cu(2+)</name>
        <dbReference type="ChEBI" id="CHEBI:29036"/>
        <label>2</label>
    </ligand>
</feature>
<feature type="binding site" evidence="2">
    <location>
        <position position="63"/>
    </location>
    <ligand>
        <name>Cu(2+)</name>
        <dbReference type="ChEBI" id="CHEBI:29036"/>
        <label>2</label>
    </ligand>
</feature>
<feature type="binding site" evidence="2">
    <location>
        <position position="64"/>
    </location>
    <ligand>
        <name>Cu(2+)</name>
        <dbReference type="ChEBI" id="CHEBI:29036"/>
        <label>2</label>
    </ligand>
</feature>
<feature type="binding site" evidence="2">
    <location>
        <position position="70"/>
    </location>
    <ligand>
        <name>Cu(2+)</name>
        <dbReference type="ChEBI" id="CHEBI:29036"/>
        <label>3</label>
    </ligand>
</feature>
<feature type="binding site" evidence="2">
    <location>
        <position position="71"/>
    </location>
    <ligand>
        <name>Cu(2+)</name>
        <dbReference type="ChEBI" id="CHEBI:29036"/>
        <label>3</label>
    </ligand>
</feature>
<feature type="binding site" evidence="2">
    <location>
        <position position="72"/>
    </location>
    <ligand>
        <name>Cu(2+)</name>
        <dbReference type="ChEBI" id="CHEBI:29036"/>
        <label>3</label>
    </ligand>
</feature>
<feature type="binding site" evidence="2">
    <location>
        <position position="78"/>
    </location>
    <ligand>
        <name>Cu(2+)</name>
        <dbReference type="ChEBI" id="CHEBI:29036"/>
        <label>4</label>
    </ligand>
</feature>
<feature type="binding site" evidence="2">
    <location>
        <position position="79"/>
    </location>
    <ligand>
        <name>Cu(2+)</name>
        <dbReference type="ChEBI" id="CHEBI:29036"/>
        <label>4</label>
    </ligand>
</feature>
<feature type="binding site" evidence="2">
    <location>
        <position position="80"/>
    </location>
    <ligand>
        <name>Cu(2+)</name>
        <dbReference type="ChEBI" id="CHEBI:29036"/>
        <label>4</label>
    </ligand>
</feature>
<feature type="lipid moiety-binding region" description="GPI-anchor amidated serine" evidence="3">
    <location>
        <position position="223"/>
    </location>
</feature>
<feature type="glycosylation site" description="N-linked (GlcNAc...) asparagine" evidence="5">
    <location>
        <position position="174"/>
    </location>
</feature>
<feature type="glycosylation site" description="N-linked (GlcNAc...) asparagine" evidence="5">
    <location>
        <position position="190"/>
    </location>
</feature>
<feature type="disulfide bond" evidence="3">
    <location>
        <begin position="172"/>
        <end position="207"/>
    </location>
</feature>
<feature type="non-terminal residue">
    <location>
        <position position="1"/>
    </location>
</feature>
<feature type="non-terminal residue">
    <location>
        <position position="241"/>
    </location>
</feature>
<name>PRIO_MANSP</name>
<sequence>MLVLFVATWSDLGLCKKRPKPGGWNTGGSRYPGQGSPGGNRYPPQGGGGWGQPHGGGWGQPHGGGWGQPHGGGWGQPHGGGWGQGGGTHNQWHKPNKPKTSMKHMAGAAAAGAVVGGLGGYMLGSAMSRPLIHFGNDYEDRYYRENMYRYPNQVYYRPVDQYSNQNNFVHDCVNITIKQHTVTTTTKGENFTETDVKMMERVVEQMCITQYEKESQAYYQRGSSMVLFSSPPVILLISFLI</sequence>
<proteinExistence type="inferred from homology"/>